<protein>
    <recommendedName>
        <fullName evidence="3">Protein VERNALIZATION 2</fullName>
        <shortName evidence="3">BdVRN2</shortName>
    </recommendedName>
</protein>
<organism>
    <name type="scientific">Brachypodium distachyon</name>
    <name type="common">Purple false brome</name>
    <name type="synonym">Trachynia distachya</name>
    <dbReference type="NCBI Taxonomy" id="15368"/>
    <lineage>
        <taxon>Eukaryota</taxon>
        <taxon>Viridiplantae</taxon>
        <taxon>Streptophyta</taxon>
        <taxon>Embryophyta</taxon>
        <taxon>Tracheophyta</taxon>
        <taxon>Spermatophyta</taxon>
        <taxon>Magnoliopsida</taxon>
        <taxon>Liliopsida</taxon>
        <taxon>Poales</taxon>
        <taxon>Poaceae</taxon>
        <taxon>BOP clade</taxon>
        <taxon>Pooideae</taxon>
        <taxon>Stipodae</taxon>
        <taxon>Brachypodieae</taxon>
        <taxon>Brachypodium</taxon>
    </lineage>
</organism>
<gene>
    <name evidence="3" type="primary">VRN2</name>
    <name evidence="4" type="ORF">BRADI_3g10010v3</name>
</gene>
<dbReference type="EMBL" id="CM000882">
    <property type="protein sequence ID" value="KQJ94345.2"/>
    <property type="molecule type" value="Genomic_DNA"/>
</dbReference>
<dbReference type="SMR" id="A0A0Q3PY21"/>
<dbReference type="EnsemblPlants" id="KQJ94345">
    <property type="protein sequence ID" value="KQJ94345"/>
    <property type="gene ID" value="BRADI_3g10010v3"/>
</dbReference>
<dbReference type="Gramene" id="KQJ94345">
    <property type="protein sequence ID" value="KQJ94345"/>
    <property type="gene ID" value="BRADI_3g10010v3"/>
</dbReference>
<dbReference type="OrthoDB" id="153872at2759"/>
<dbReference type="Proteomes" id="UP000008810">
    <property type="component" value="Chromosome 3"/>
</dbReference>
<dbReference type="ExpressionAtlas" id="A0A0Q3PY21">
    <property type="expression patterns" value="differential"/>
</dbReference>
<dbReference type="GO" id="GO:0005634">
    <property type="term" value="C:nucleus"/>
    <property type="evidence" value="ECO:0000318"/>
    <property type="project" value="GO_Central"/>
</dbReference>
<dbReference type="GO" id="GO:0010220">
    <property type="term" value="P:positive regulation of vernalization response"/>
    <property type="evidence" value="ECO:0000314"/>
    <property type="project" value="UniProtKB"/>
</dbReference>
<dbReference type="GO" id="GO:0009909">
    <property type="term" value="P:regulation of flower development"/>
    <property type="evidence" value="ECO:0000318"/>
    <property type="project" value="GO_Central"/>
</dbReference>
<dbReference type="GO" id="GO:0010048">
    <property type="term" value="P:vernalization response"/>
    <property type="evidence" value="ECO:0000270"/>
    <property type="project" value="UniProtKB"/>
</dbReference>
<dbReference type="InterPro" id="IPR010402">
    <property type="entry name" value="CCT_domain"/>
</dbReference>
<dbReference type="InterPro" id="IPR045281">
    <property type="entry name" value="CONSTANS-like"/>
</dbReference>
<dbReference type="PANTHER" id="PTHR31319:SF98">
    <property type="entry name" value="TRANSCRIPTION FACTOR GHD7"/>
    <property type="match status" value="1"/>
</dbReference>
<dbReference type="PANTHER" id="PTHR31319">
    <property type="entry name" value="ZINC FINGER PROTEIN CONSTANS-LIKE 4"/>
    <property type="match status" value="1"/>
</dbReference>
<dbReference type="Pfam" id="PF06203">
    <property type="entry name" value="CCT"/>
    <property type="match status" value="1"/>
</dbReference>
<dbReference type="PROSITE" id="PS51017">
    <property type="entry name" value="CCT"/>
    <property type="match status" value="1"/>
</dbReference>
<evidence type="ECO:0000255" key="1">
    <source>
        <dbReference type="PROSITE-ProRule" id="PRU00357"/>
    </source>
</evidence>
<evidence type="ECO:0000269" key="2">
    <source>
    </source>
</evidence>
<evidence type="ECO:0000303" key="3">
    <source>
    </source>
</evidence>
<evidence type="ECO:0000312" key="4">
    <source>
        <dbReference type="EMBL" id="KQJ94345.2"/>
    </source>
</evidence>
<reference key="1">
    <citation type="journal article" date="2010" name="Nature">
        <title>Genome sequencing and analysis of the model grass Brachypodium distachyon.</title>
        <authorList>
            <consortium name="International Brachypodium Initiative"/>
        </authorList>
    </citation>
    <scope>NUCLEOTIDE SEQUENCE [LARGE SCALE GENOMIC DNA]</scope>
    <source>
        <strain>cv. Bd21</strain>
    </source>
</reference>
<reference key="2">
    <citation type="submission" date="2017-06" db="EMBL/GenBank/DDBJ databases">
        <title>WGS assembly of Brachypodium distachyon.</title>
        <authorList>
            <consortium name="The International Brachypodium Initiative"/>
            <person name="Lucas S."/>
            <person name="Harmon-Smith M."/>
            <person name="Lail K."/>
            <person name="Tice H."/>
            <person name="Grimwood J."/>
            <person name="Bruce D."/>
            <person name="Barry K."/>
            <person name="Shu S."/>
            <person name="Lindquist E."/>
            <person name="Wang M."/>
            <person name="Pitluck S."/>
            <person name="Vogel J.P."/>
            <person name="Garvin D.F."/>
            <person name="Mockler T.C."/>
            <person name="Schmutz J."/>
            <person name="Rokhsar D."/>
            <person name="Bevan M.W."/>
        </authorList>
    </citation>
    <scope>GENOME REANNOTATION</scope>
    <source>
        <strain>cv. Bd21</strain>
    </source>
</reference>
<reference key="3">
    <citation type="journal article" date="2017" name="Front. Plant Sci.">
        <title>BdVRN1 expression confers flowering competency and is negatively correlated with freezing tolerance in Brachypodium distachyon.</title>
        <authorList>
            <person name="Feng Y."/>
            <person name="Yin Y."/>
            <person name="Fei S."/>
        </authorList>
    </citation>
    <scope>FUNCTION</scope>
    <scope>TISSUE SPECIFICITY</scope>
    <scope>INDUCTION BY VERNALIZATION</scope>
    <scope>NOMENCLATURE</scope>
    <source>
        <strain>cv. Bd21</strain>
        <strain>cv. Bd29-1</strain>
    </source>
</reference>
<sequence>MSTCGMCAGSSYCPHHQRASWPAHDHRSPPPVEYHDFFHHSVQGQAAAWLRLDNPPLPQPAEHDQAAAGMIHGGHRHGTFELNRPLMDDQHLLQMPPPPTIMPFGGGTFGDTMGREAIMAVDGEMMMVAAHHPTMHEREAKVMRYREKKKRRRYEKQIRYESRKAYAEMRPRVKGRFAKVPGSAAPPSPPPSGPRIYIASCFKSNGTVIVQEVMHDLPI</sequence>
<keyword id="KW-0539">Nucleus</keyword>
<keyword id="KW-1185">Reference proteome</keyword>
<accession>A0A0Q3PY21</accession>
<name>VRN2_BRADI</name>
<proteinExistence type="evidence at transcript level"/>
<feature type="chain" id="PRO_0000458556" description="Protein VERNALIZATION 2">
    <location>
        <begin position="1"/>
        <end position="219"/>
    </location>
</feature>
<feature type="domain" description="CCT" evidence="1">
    <location>
        <begin position="138"/>
        <end position="180"/>
    </location>
</feature>
<comment type="function">
    <text evidence="2">Involved in the regulation of vernalization; this process in essential for flowering in cv. Bd29-1 but seems do not occur in cv. Bd21.</text>
</comment>
<comment type="subcellular location">
    <subcellularLocation>
        <location evidence="1">Nucleus</location>
    </subcellularLocation>
</comment>
<comment type="tissue specificity">
    <text evidence="2">Mainly expressed in leaves, and at low levels in the shoot apical meristem (SAM).</text>
</comment>
<comment type="induction">
    <text evidence="2">Accumulates in leaves but not in shoot apical meristem (SAM) meristem during vernalization in cv. Bd29-1, but expression is independent of vernalization in cv. Bd21.</text>
</comment>